<gene>
    <name evidence="1" type="primary">lgt</name>
    <name type="ordered locus">Shewmr4_2862</name>
</gene>
<sequence>MALNFPNIDPVIVKFGPFDIFGQTFEPALRWYGFTYLVGFVAAMWLLNRQADRSNGLWSREQVSDLLFYGFLGVILGGRIGYVLFYHFDYFLASPMYLFKISEGGMSFHGGLMGVITAMIYIAWKQKRTFFAVADMVAPVVPIGLGAGRIGNFINGELWGRVTDVPWAMVFPSGGPEPRHPSQLYQFALEGVALFLLLYWFSKRTKKVGAVSGMFLLGYGIFRVIVETVRQPDAQLGLYWGFMTMGQILSVPMVLFGLYLILRPEGKQ</sequence>
<proteinExistence type="inferred from homology"/>
<name>LGT_SHESM</name>
<comment type="function">
    <text evidence="1">Catalyzes the transfer of the diacylglyceryl group from phosphatidylglycerol to the sulfhydryl group of the N-terminal cysteine of a prolipoprotein, the first step in the formation of mature lipoproteins.</text>
</comment>
<comment type="catalytic activity">
    <reaction evidence="1">
        <text>L-cysteinyl-[prolipoprotein] + a 1,2-diacyl-sn-glycero-3-phospho-(1'-sn-glycerol) = an S-1,2-diacyl-sn-glyceryl-L-cysteinyl-[prolipoprotein] + sn-glycerol 1-phosphate + H(+)</text>
        <dbReference type="Rhea" id="RHEA:56712"/>
        <dbReference type="Rhea" id="RHEA-COMP:14679"/>
        <dbReference type="Rhea" id="RHEA-COMP:14680"/>
        <dbReference type="ChEBI" id="CHEBI:15378"/>
        <dbReference type="ChEBI" id="CHEBI:29950"/>
        <dbReference type="ChEBI" id="CHEBI:57685"/>
        <dbReference type="ChEBI" id="CHEBI:64716"/>
        <dbReference type="ChEBI" id="CHEBI:140658"/>
        <dbReference type="EC" id="2.5.1.145"/>
    </reaction>
</comment>
<comment type="pathway">
    <text evidence="1">Protein modification; lipoprotein biosynthesis (diacylglyceryl transfer).</text>
</comment>
<comment type="subcellular location">
    <subcellularLocation>
        <location evidence="1">Cell inner membrane</location>
        <topology evidence="1">Multi-pass membrane protein</topology>
    </subcellularLocation>
</comment>
<comment type="similarity">
    <text evidence="1">Belongs to the Lgt family.</text>
</comment>
<accession>Q0HG84</accession>
<keyword id="KW-0997">Cell inner membrane</keyword>
<keyword id="KW-1003">Cell membrane</keyword>
<keyword id="KW-0472">Membrane</keyword>
<keyword id="KW-0808">Transferase</keyword>
<keyword id="KW-0812">Transmembrane</keyword>
<keyword id="KW-1133">Transmembrane helix</keyword>
<reference key="1">
    <citation type="submission" date="2006-08" db="EMBL/GenBank/DDBJ databases">
        <title>Complete sequence of Shewanella sp. MR-4.</title>
        <authorList>
            <consortium name="US DOE Joint Genome Institute"/>
            <person name="Copeland A."/>
            <person name="Lucas S."/>
            <person name="Lapidus A."/>
            <person name="Barry K."/>
            <person name="Detter J.C."/>
            <person name="Glavina del Rio T."/>
            <person name="Hammon N."/>
            <person name="Israni S."/>
            <person name="Dalin E."/>
            <person name="Tice H."/>
            <person name="Pitluck S."/>
            <person name="Kiss H."/>
            <person name="Brettin T."/>
            <person name="Bruce D."/>
            <person name="Han C."/>
            <person name="Tapia R."/>
            <person name="Gilna P."/>
            <person name="Schmutz J."/>
            <person name="Larimer F."/>
            <person name="Land M."/>
            <person name="Hauser L."/>
            <person name="Kyrpides N."/>
            <person name="Mikhailova N."/>
            <person name="Nealson K."/>
            <person name="Konstantinidis K."/>
            <person name="Klappenbach J."/>
            <person name="Tiedje J."/>
            <person name="Richardson P."/>
        </authorList>
    </citation>
    <scope>NUCLEOTIDE SEQUENCE [LARGE SCALE GENOMIC DNA]</scope>
    <source>
        <strain>MR-4</strain>
    </source>
</reference>
<evidence type="ECO:0000255" key="1">
    <source>
        <dbReference type="HAMAP-Rule" id="MF_01147"/>
    </source>
</evidence>
<organism>
    <name type="scientific">Shewanella sp. (strain MR-4)</name>
    <dbReference type="NCBI Taxonomy" id="60480"/>
    <lineage>
        <taxon>Bacteria</taxon>
        <taxon>Pseudomonadati</taxon>
        <taxon>Pseudomonadota</taxon>
        <taxon>Gammaproteobacteria</taxon>
        <taxon>Alteromonadales</taxon>
        <taxon>Shewanellaceae</taxon>
        <taxon>Shewanella</taxon>
    </lineage>
</organism>
<protein>
    <recommendedName>
        <fullName evidence="1">Phosphatidylglycerol--prolipoprotein diacylglyceryl transferase</fullName>
        <ecNumber evidence="1">2.5.1.145</ecNumber>
    </recommendedName>
</protein>
<feature type="chain" id="PRO_1000073058" description="Phosphatidylglycerol--prolipoprotein diacylglyceryl transferase">
    <location>
        <begin position="1"/>
        <end position="268"/>
    </location>
</feature>
<feature type="transmembrane region" description="Helical" evidence="1">
    <location>
        <begin position="27"/>
        <end position="47"/>
    </location>
</feature>
<feature type="transmembrane region" description="Helical" evidence="1">
    <location>
        <begin position="66"/>
        <end position="86"/>
    </location>
</feature>
<feature type="transmembrane region" description="Helical" evidence="1">
    <location>
        <begin position="104"/>
        <end position="124"/>
    </location>
</feature>
<feature type="transmembrane region" description="Helical" evidence="1">
    <location>
        <begin position="130"/>
        <end position="150"/>
    </location>
</feature>
<feature type="transmembrane region" description="Helical" evidence="1">
    <location>
        <begin position="181"/>
        <end position="201"/>
    </location>
</feature>
<feature type="transmembrane region" description="Helical" evidence="1">
    <location>
        <begin position="208"/>
        <end position="228"/>
    </location>
</feature>
<feature type="transmembrane region" description="Helical" evidence="1">
    <location>
        <begin position="242"/>
        <end position="262"/>
    </location>
</feature>
<feature type="binding site" evidence="1">
    <location>
        <position position="149"/>
    </location>
    <ligand>
        <name>a 1,2-diacyl-sn-glycero-3-phospho-(1'-sn-glycerol)</name>
        <dbReference type="ChEBI" id="CHEBI:64716"/>
    </ligand>
</feature>
<dbReference type="EC" id="2.5.1.145" evidence="1"/>
<dbReference type="EMBL" id="CP000446">
    <property type="protein sequence ID" value="ABI39933.1"/>
    <property type="molecule type" value="Genomic_DNA"/>
</dbReference>
<dbReference type="RefSeq" id="WP_011623612.1">
    <property type="nucleotide sequence ID" value="NC_008321.1"/>
</dbReference>
<dbReference type="SMR" id="Q0HG84"/>
<dbReference type="KEGG" id="she:Shewmr4_2862"/>
<dbReference type="HOGENOM" id="CLU_013386_1_0_6"/>
<dbReference type="UniPathway" id="UPA00664"/>
<dbReference type="GO" id="GO:0005886">
    <property type="term" value="C:plasma membrane"/>
    <property type="evidence" value="ECO:0007669"/>
    <property type="project" value="UniProtKB-SubCell"/>
</dbReference>
<dbReference type="GO" id="GO:0008961">
    <property type="term" value="F:phosphatidylglycerol-prolipoprotein diacylglyceryl transferase activity"/>
    <property type="evidence" value="ECO:0007669"/>
    <property type="project" value="UniProtKB-UniRule"/>
</dbReference>
<dbReference type="GO" id="GO:0042158">
    <property type="term" value="P:lipoprotein biosynthetic process"/>
    <property type="evidence" value="ECO:0007669"/>
    <property type="project" value="UniProtKB-UniRule"/>
</dbReference>
<dbReference type="HAMAP" id="MF_01147">
    <property type="entry name" value="Lgt"/>
    <property type="match status" value="1"/>
</dbReference>
<dbReference type="InterPro" id="IPR001640">
    <property type="entry name" value="Lgt"/>
</dbReference>
<dbReference type="NCBIfam" id="TIGR00544">
    <property type="entry name" value="lgt"/>
    <property type="match status" value="1"/>
</dbReference>
<dbReference type="PANTHER" id="PTHR30589:SF0">
    <property type="entry name" value="PHOSPHATIDYLGLYCEROL--PROLIPOPROTEIN DIACYLGLYCERYL TRANSFERASE"/>
    <property type="match status" value="1"/>
</dbReference>
<dbReference type="PANTHER" id="PTHR30589">
    <property type="entry name" value="PROLIPOPROTEIN DIACYLGLYCERYL TRANSFERASE"/>
    <property type="match status" value="1"/>
</dbReference>
<dbReference type="Pfam" id="PF01790">
    <property type="entry name" value="LGT"/>
    <property type="match status" value="1"/>
</dbReference>
<dbReference type="PROSITE" id="PS01311">
    <property type="entry name" value="LGT"/>
    <property type="match status" value="1"/>
</dbReference>